<comment type="function">
    <text evidence="1">One of the primary rRNA binding proteins, it binds directly to 16S rRNA where it nucleates assembly of the head domain of the 30S subunit. Is located at the subunit interface close to the decoding center, probably blocks exit of the E-site tRNA.</text>
</comment>
<comment type="subunit">
    <text evidence="1">Part of the 30S ribosomal subunit. Contacts proteins S9 and S11.</text>
</comment>
<comment type="similarity">
    <text evidence="1">Belongs to the universal ribosomal protein uS7 family.</text>
</comment>
<feature type="chain" id="PRO_1000060419" description="Small ribosomal subunit protein uS7">
    <location>
        <begin position="1"/>
        <end position="156"/>
    </location>
</feature>
<accession>A5VLK9</accession>
<evidence type="ECO:0000255" key="1">
    <source>
        <dbReference type="HAMAP-Rule" id="MF_00480"/>
    </source>
</evidence>
<evidence type="ECO:0000305" key="2"/>
<organism>
    <name type="scientific">Limosilactobacillus reuteri (strain DSM 20016)</name>
    <name type="common">Lactobacillus reuteri</name>
    <dbReference type="NCBI Taxonomy" id="557436"/>
    <lineage>
        <taxon>Bacteria</taxon>
        <taxon>Bacillati</taxon>
        <taxon>Bacillota</taxon>
        <taxon>Bacilli</taxon>
        <taxon>Lactobacillales</taxon>
        <taxon>Lactobacillaceae</taxon>
        <taxon>Limosilactobacillus</taxon>
    </lineage>
</organism>
<reference key="1">
    <citation type="journal article" date="2011" name="PLoS Genet.">
        <title>The evolution of host specialization in the vertebrate gut symbiont Lactobacillus reuteri.</title>
        <authorList>
            <person name="Frese S.A."/>
            <person name="Benson A.K."/>
            <person name="Tannock G.W."/>
            <person name="Loach D.M."/>
            <person name="Kim J."/>
            <person name="Zhang M."/>
            <person name="Oh P.L."/>
            <person name="Heng N.C."/>
            <person name="Patil P.B."/>
            <person name="Juge N."/>
            <person name="Mackenzie D.A."/>
            <person name="Pearson B.M."/>
            <person name="Lapidus A."/>
            <person name="Dalin E."/>
            <person name="Tice H."/>
            <person name="Goltsman E."/>
            <person name="Land M."/>
            <person name="Hauser L."/>
            <person name="Ivanova N."/>
            <person name="Kyrpides N.C."/>
            <person name="Walter J."/>
        </authorList>
    </citation>
    <scope>NUCLEOTIDE SEQUENCE [LARGE SCALE GENOMIC DNA]</scope>
    <source>
        <strain>DSM 20016</strain>
    </source>
</reference>
<sequence length="156" mass="17986">MPRKGHVQKREILPDPMYNSKLVTSLIDHLMIDGKRGTATKILYAAFDEIKNETGNDPVEVFQQAMENVMPVLEVKARRVGGSNYQVPIEVRPDRRTTLGLRWIVQYARLRGEHTMVERLAREIIDASNNTGASVKKREDTHRMAEANRAFAHYRW</sequence>
<protein>
    <recommendedName>
        <fullName evidence="1">Small ribosomal subunit protein uS7</fullName>
    </recommendedName>
    <alternativeName>
        <fullName evidence="2">30S ribosomal protein S7</fullName>
    </alternativeName>
</protein>
<keyword id="KW-1185">Reference proteome</keyword>
<keyword id="KW-0687">Ribonucleoprotein</keyword>
<keyword id="KW-0689">Ribosomal protein</keyword>
<keyword id="KW-0694">RNA-binding</keyword>
<keyword id="KW-0699">rRNA-binding</keyword>
<keyword id="KW-0820">tRNA-binding</keyword>
<proteinExistence type="inferred from homology"/>
<dbReference type="EMBL" id="CP000705">
    <property type="protein sequence ID" value="ABQ83733.1"/>
    <property type="molecule type" value="Genomic_DNA"/>
</dbReference>
<dbReference type="RefSeq" id="WP_003668788.1">
    <property type="nucleotide sequence ID" value="NZ_AZDD01000010.1"/>
</dbReference>
<dbReference type="SMR" id="A5VLK9"/>
<dbReference type="STRING" id="557436.Lreu_1487"/>
<dbReference type="GeneID" id="77191482"/>
<dbReference type="KEGG" id="lre:Lreu_1487"/>
<dbReference type="PATRIC" id="fig|557436.17.peg.136"/>
<dbReference type="eggNOG" id="COG0049">
    <property type="taxonomic scope" value="Bacteria"/>
</dbReference>
<dbReference type="HOGENOM" id="CLU_072226_1_1_9"/>
<dbReference type="Proteomes" id="UP000001991">
    <property type="component" value="Chromosome"/>
</dbReference>
<dbReference type="GO" id="GO:0015935">
    <property type="term" value="C:small ribosomal subunit"/>
    <property type="evidence" value="ECO:0007669"/>
    <property type="project" value="InterPro"/>
</dbReference>
<dbReference type="GO" id="GO:0019843">
    <property type="term" value="F:rRNA binding"/>
    <property type="evidence" value="ECO:0007669"/>
    <property type="project" value="UniProtKB-UniRule"/>
</dbReference>
<dbReference type="GO" id="GO:0003735">
    <property type="term" value="F:structural constituent of ribosome"/>
    <property type="evidence" value="ECO:0007669"/>
    <property type="project" value="InterPro"/>
</dbReference>
<dbReference type="GO" id="GO:0000049">
    <property type="term" value="F:tRNA binding"/>
    <property type="evidence" value="ECO:0007669"/>
    <property type="project" value="UniProtKB-UniRule"/>
</dbReference>
<dbReference type="GO" id="GO:0006412">
    <property type="term" value="P:translation"/>
    <property type="evidence" value="ECO:0007669"/>
    <property type="project" value="UniProtKB-UniRule"/>
</dbReference>
<dbReference type="CDD" id="cd14869">
    <property type="entry name" value="uS7_Bacteria"/>
    <property type="match status" value="1"/>
</dbReference>
<dbReference type="FunFam" id="1.10.455.10:FF:000001">
    <property type="entry name" value="30S ribosomal protein S7"/>
    <property type="match status" value="1"/>
</dbReference>
<dbReference type="Gene3D" id="1.10.455.10">
    <property type="entry name" value="Ribosomal protein S7 domain"/>
    <property type="match status" value="1"/>
</dbReference>
<dbReference type="HAMAP" id="MF_00480_B">
    <property type="entry name" value="Ribosomal_uS7_B"/>
    <property type="match status" value="1"/>
</dbReference>
<dbReference type="InterPro" id="IPR000235">
    <property type="entry name" value="Ribosomal_uS7"/>
</dbReference>
<dbReference type="InterPro" id="IPR005717">
    <property type="entry name" value="Ribosomal_uS7_bac/org-type"/>
</dbReference>
<dbReference type="InterPro" id="IPR020606">
    <property type="entry name" value="Ribosomal_uS7_CS"/>
</dbReference>
<dbReference type="InterPro" id="IPR023798">
    <property type="entry name" value="Ribosomal_uS7_dom"/>
</dbReference>
<dbReference type="InterPro" id="IPR036823">
    <property type="entry name" value="Ribosomal_uS7_dom_sf"/>
</dbReference>
<dbReference type="NCBIfam" id="TIGR01029">
    <property type="entry name" value="rpsG_bact"/>
    <property type="match status" value="1"/>
</dbReference>
<dbReference type="PANTHER" id="PTHR11205">
    <property type="entry name" value="RIBOSOMAL PROTEIN S7"/>
    <property type="match status" value="1"/>
</dbReference>
<dbReference type="Pfam" id="PF00177">
    <property type="entry name" value="Ribosomal_S7"/>
    <property type="match status" value="1"/>
</dbReference>
<dbReference type="PIRSF" id="PIRSF002122">
    <property type="entry name" value="RPS7p_RPS7a_RPS5e_RPS7o"/>
    <property type="match status" value="1"/>
</dbReference>
<dbReference type="SUPFAM" id="SSF47973">
    <property type="entry name" value="Ribosomal protein S7"/>
    <property type="match status" value="1"/>
</dbReference>
<dbReference type="PROSITE" id="PS00052">
    <property type="entry name" value="RIBOSOMAL_S7"/>
    <property type="match status" value="1"/>
</dbReference>
<gene>
    <name evidence="1" type="primary">rpsG</name>
    <name type="ordered locus">Lreu_1487</name>
</gene>
<name>RS7_LIMRD</name>